<feature type="chain" id="PRO_0000048016" description="DNA-directed RNA polymerase subunit beta N-terminal section">
    <location>
        <begin position="1"/>
        <end position="822"/>
    </location>
</feature>
<feature type="region of interest" description="Disordered" evidence="2">
    <location>
        <begin position="376"/>
        <end position="408"/>
    </location>
</feature>
<feature type="compositionally biased region" description="Low complexity" evidence="2">
    <location>
        <begin position="383"/>
        <end position="393"/>
    </location>
</feature>
<sequence>MLNISTNMMINQTLNFDSNQESQKNKTERISKTKLTRELITKTDHDIYVDDISFLQREDNVNVSQIDLTARGVLNPEDQGVLHKSTEFGVFNKNKTGLPASVDLKIKQNSFFSVKQPDFNKYLISDFVEIQRNSFFTLLEKGIIEEFSKRNPITNSKKTMEIFFYPDYYQLTPPEYSPSQAIIKSKSYTSKLYIPVQLTDKSKNIIKLKWVYIGDIPLMTKRGHFILNGCARVIVNQMVRSPGIYYQKKIYENFSNKWSEKPENTFTRYFADLICNRGTWLRIEMDKYNKIWAQMKRVPKIPIMWFLIAVGLTDKIVLKTVMDSKILLYNLDEDPLNPRKKPLPYVKTPPAAWSAIYNIVFAKKIKAQEKAKKMLELTEGNPSSKSQTKNKTSASKKSKTLNVANTKGKTPAENIKTLSELIDLEKALFLKSEQGRKWIFNKFMNPRTYDLGKVGRVNFNRKLKLSISQDITTLTPQDLLAATNNLILVSKGLRELDDIDHLKNRRVRTSGELIQIQIGVGLVRLEKTIREKMTYASGLSSLPSQKFAFRSSKQRNQSPVGDAENATQLTIGNLINTKPFNGALREFFGTSPLSQFMDQINPLAELTHKRRLSSMGPGGVTRDSATLAIRGIHPSHYGRICPVETPEGKNTGLVNSLTAYARVNAAGYIETPFYRVYKGQVQKKTGLYFFSAKQEEKIKLGAPDLYTSEIGFLPKASIPVRIVEDFTKISRNEIQYVGVAPIQMISIATSLIPFFEHDDANRALMGSNMQRQAVPILKPQRPIVGTGLEARAVSDSGHVITAKSSGIVMYTSSKEIIIYSLQ</sequence>
<comment type="function">
    <text>DNA-dependent RNA polymerase catalyzes the transcription of DNA into RNA using the four ribonucleoside triphosphates as substrates.</text>
</comment>
<comment type="catalytic activity">
    <reaction>
        <text>RNA(n) + a ribonucleoside 5'-triphosphate = RNA(n+1) + diphosphate</text>
        <dbReference type="Rhea" id="RHEA:21248"/>
        <dbReference type="Rhea" id="RHEA-COMP:14527"/>
        <dbReference type="Rhea" id="RHEA-COMP:17342"/>
        <dbReference type="ChEBI" id="CHEBI:33019"/>
        <dbReference type="ChEBI" id="CHEBI:61557"/>
        <dbReference type="ChEBI" id="CHEBI:140395"/>
        <dbReference type="EC" id="2.7.7.6"/>
    </reaction>
</comment>
<comment type="subunit">
    <text evidence="1">In plastids the minimal PEP RNA polymerase catalytic core is composed of four subunits: alpha, beta, beta', and beta''. When a (nuclear-encoded) sigma factor is associated with the core the holoenzyme is formed, which can initiate transcription (By similarity).</text>
</comment>
<comment type="subcellular location">
    <subcellularLocation>
        <location>Plastid</location>
        <location>Chloroplast</location>
    </subcellularLocation>
</comment>
<comment type="miscellaneous">
    <text>In C.reinhardtii the gene for this protein is split in two.</text>
</comment>
<comment type="similarity">
    <text evidence="3">Belongs to the RNA polymerase beta chain family.</text>
</comment>
<name>RPOB1_CHLRE</name>
<proteinExistence type="evidence at transcript level"/>
<geneLocation type="chloroplast"/>
<gene>
    <name type="primary">rpoB1</name>
</gene>
<dbReference type="EC" id="2.7.7.6"/>
<dbReference type="EMBL" id="AY160684">
    <property type="protein sequence ID" value="AAN41266.1"/>
    <property type="molecule type" value="Genomic_DNA"/>
</dbReference>
<dbReference type="EMBL" id="FJ423446">
    <property type="protein sequence ID" value="ACJ50129.1"/>
    <property type="molecule type" value="Genomic_DNA"/>
</dbReference>
<dbReference type="EMBL" id="BK000554">
    <property type="protein sequence ID" value="DAA00943.1"/>
    <property type="molecule type" value="Genomic_DNA"/>
</dbReference>
<dbReference type="PIR" id="S26872">
    <property type="entry name" value="S26872"/>
</dbReference>
<dbReference type="SMR" id="Q8HTL6"/>
<dbReference type="FunCoup" id="Q8HTL6">
    <property type="interactions" value="174"/>
</dbReference>
<dbReference type="STRING" id="3055.Q8HTL6"/>
<dbReference type="PaxDb" id="3055-DAA00943"/>
<dbReference type="KEGG" id="cre:ChreCp042"/>
<dbReference type="eggNOG" id="KOG0214">
    <property type="taxonomic scope" value="Eukaryota"/>
</dbReference>
<dbReference type="HOGENOM" id="CLU_000524_4_0_1"/>
<dbReference type="InParanoid" id="Q8HTL6"/>
<dbReference type="Proteomes" id="UP000006906">
    <property type="component" value="Chloroplast"/>
</dbReference>
<dbReference type="GO" id="GO:0009507">
    <property type="term" value="C:chloroplast"/>
    <property type="evidence" value="ECO:0007669"/>
    <property type="project" value="UniProtKB-SubCell"/>
</dbReference>
<dbReference type="GO" id="GO:0000428">
    <property type="term" value="C:DNA-directed RNA polymerase complex"/>
    <property type="evidence" value="ECO:0007669"/>
    <property type="project" value="UniProtKB-KW"/>
</dbReference>
<dbReference type="GO" id="GO:0005739">
    <property type="term" value="C:mitochondrion"/>
    <property type="evidence" value="ECO:0007669"/>
    <property type="project" value="GOC"/>
</dbReference>
<dbReference type="GO" id="GO:0003677">
    <property type="term" value="F:DNA binding"/>
    <property type="evidence" value="ECO:0007669"/>
    <property type="project" value="InterPro"/>
</dbReference>
<dbReference type="GO" id="GO:0003899">
    <property type="term" value="F:DNA-directed RNA polymerase activity"/>
    <property type="evidence" value="ECO:0007669"/>
    <property type="project" value="UniProtKB-EC"/>
</dbReference>
<dbReference type="GO" id="GO:0032549">
    <property type="term" value="F:ribonucleoside binding"/>
    <property type="evidence" value="ECO:0007669"/>
    <property type="project" value="InterPro"/>
</dbReference>
<dbReference type="GO" id="GO:0006351">
    <property type="term" value="P:DNA-templated transcription"/>
    <property type="evidence" value="ECO:0007669"/>
    <property type="project" value="InterPro"/>
</dbReference>
<dbReference type="Gene3D" id="3.90.1100.10">
    <property type="match status" value="3"/>
</dbReference>
<dbReference type="InterPro" id="IPR015712">
    <property type="entry name" value="DNA-dir_RNA_pol_su2"/>
</dbReference>
<dbReference type="InterPro" id="IPR007644">
    <property type="entry name" value="RNA_pol_bsu_protrusion"/>
</dbReference>
<dbReference type="InterPro" id="IPR007642">
    <property type="entry name" value="RNA_pol_Rpb2_2"/>
</dbReference>
<dbReference type="InterPro" id="IPR007645">
    <property type="entry name" value="RNA_pol_Rpb2_3"/>
</dbReference>
<dbReference type="PANTHER" id="PTHR20856">
    <property type="entry name" value="DNA-DIRECTED RNA POLYMERASE I SUBUNIT 2"/>
    <property type="match status" value="1"/>
</dbReference>
<dbReference type="Pfam" id="PF04563">
    <property type="entry name" value="RNA_pol_Rpb2_1"/>
    <property type="match status" value="1"/>
</dbReference>
<dbReference type="Pfam" id="PF04561">
    <property type="entry name" value="RNA_pol_Rpb2_2"/>
    <property type="match status" value="2"/>
</dbReference>
<dbReference type="Pfam" id="PF04565">
    <property type="entry name" value="RNA_pol_Rpb2_3"/>
    <property type="match status" value="1"/>
</dbReference>
<dbReference type="SUPFAM" id="SSF64484">
    <property type="entry name" value="beta and beta-prime subunits of DNA dependent RNA-polymerase"/>
    <property type="match status" value="1"/>
</dbReference>
<protein>
    <recommendedName>
        <fullName>DNA-directed RNA polymerase subunit beta N-terminal section</fullName>
        <ecNumber>2.7.7.6</ecNumber>
    </recommendedName>
    <alternativeName>
        <fullName>PEP</fullName>
    </alternativeName>
    <alternativeName>
        <fullName>Plastid-encoded RNA polymerase subunit beta N-terminal section</fullName>
        <shortName>RNA polymerase subunit beta N-terminal section</shortName>
    </alternativeName>
</protein>
<evidence type="ECO:0000250" key="1"/>
<evidence type="ECO:0000256" key="2">
    <source>
        <dbReference type="SAM" id="MobiDB-lite"/>
    </source>
</evidence>
<evidence type="ECO:0000305" key="3"/>
<organism>
    <name type="scientific">Chlamydomonas reinhardtii</name>
    <name type="common">Chlamydomonas smithii</name>
    <dbReference type="NCBI Taxonomy" id="3055"/>
    <lineage>
        <taxon>Eukaryota</taxon>
        <taxon>Viridiplantae</taxon>
        <taxon>Chlorophyta</taxon>
        <taxon>core chlorophytes</taxon>
        <taxon>Chlorophyceae</taxon>
        <taxon>CS clade</taxon>
        <taxon>Chlamydomonadales</taxon>
        <taxon>Chlamydomonadaceae</taxon>
        <taxon>Chlamydomonas</taxon>
    </lineage>
</organism>
<reference key="1">
    <citation type="journal article" date="1992" name="Curr. Genet.">
        <title>Chloroplast RNA polymerase genes of Chlamydomonas reinhardtii exhibit an unusual structure and arrangement.</title>
        <authorList>
            <person name="Fong S.E."/>
            <person name="Surzycki S.J."/>
        </authorList>
    </citation>
    <scope>NUCLEOTIDE SEQUENCE [GENOMIC DNA]</scope>
</reference>
<reference key="2">
    <citation type="journal article" date="2009" name="BMC Evol. Biol.">
        <title>Nucleotide diversity of the Chlamydomonas reinhardtii plastid genome: addressing the mutational-hazard hypothesis.</title>
        <authorList>
            <person name="Smith D.R."/>
            <person name="Lee R.W."/>
        </authorList>
    </citation>
    <scope>NUCLEOTIDE SEQUENCE [LARGE SCALE GENOMIC DNA]</scope>
    <source>
        <strain>CC-503</strain>
    </source>
</reference>
<reference key="3">
    <citation type="journal article" date="2002" name="Plant Cell">
        <title>The Chlamydomonas reinhardtii plastid chromosome: islands of genes in a sea of repeats.</title>
        <authorList>
            <person name="Maul J.E."/>
            <person name="Lilly J.W."/>
            <person name="Cui L."/>
            <person name="dePamphilis C.W."/>
            <person name="Miller W."/>
            <person name="Harris E.H."/>
            <person name="Stern D.B."/>
        </authorList>
    </citation>
    <scope>IDENTIFICATION</scope>
    <scope>COMPLETE PLASTID GENOME</scope>
</reference>
<keyword id="KW-0150">Chloroplast</keyword>
<keyword id="KW-0240">DNA-directed RNA polymerase</keyword>
<keyword id="KW-0548">Nucleotidyltransferase</keyword>
<keyword id="KW-0934">Plastid</keyword>
<keyword id="KW-1185">Reference proteome</keyword>
<keyword id="KW-0804">Transcription</keyword>
<keyword id="KW-0808">Transferase</keyword>
<accession>Q8HTL6</accession>
<accession>B7U1I2</accession>